<comment type="function">
    <text evidence="1">Bifunctional enzyme that catalyzes the formation of 4-diphosphocytidyl-2-C-methyl-D-erythritol from CTP and 2-C-methyl-D-erythritol 4-phosphate (MEP) (IspD), and catalyzes the conversion of 4-diphosphocytidyl-2-C-methyl-D-erythritol 2-phosphate (CDP-ME2P) to 2-C-methyl-D-erythritol 2,4-cyclodiphosphate (ME-CPP) with a corresponding release of cytidine 5-monophosphate (CMP) (IspF).</text>
</comment>
<comment type="catalytic activity">
    <reaction evidence="1">
        <text>2-C-methyl-D-erythritol 4-phosphate + CTP + H(+) = 4-CDP-2-C-methyl-D-erythritol + diphosphate</text>
        <dbReference type="Rhea" id="RHEA:13429"/>
        <dbReference type="ChEBI" id="CHEBI:15378"/>
        <dbReference type="ChEBI" id="CHEBI:33019"/>
        <dbReference type="ChEBI" id="CHEBI:37563"/>
        <dbReference type="ChEBI" id="CHEBI:57823"/>
        <dbReference type="ChEBI" id="CHEBI:58262"/>
        <dbReference type="EC" id="2.7.7.60"/>
    </reaction>
</comment>
<comment type="catalytic activity">
    <reaction evidence="1">
        <text>4-CDP-2-C-methyl-D-erythritol 2-phosphate = 2-C-methyl-D-erythritol 2,4-cyclic diphosphate + CMP</text>
        <dbReference type="Rhea" id="RHEA:23864"/>
        <dbReference type="ChEBI" id="CHEBI:57919"/>
        <dbReference type="ChEBI" id="CHEBI:58483"/>
        <dbReference type="ChEBI" id="CHEBI:60377"/>
        <dbReference type="EC" id="4.6.1.12"/>
    </reaction>
</comment>
<comment type="cofactor">
    <cofactor evidence="1">
        <name>a divalent metal cation</name>
        <dbReference type="ChEBI" id="CHEBI:60240"/>
    </cofactor>
</comment>
<comment type="pathway">
    <text evidence="1">Isoprenoid biosynthesis; isopentenyl diphosphate biosynthesis via DXP pathway; isopentenyl diphosphate from 1-deoxy-D-xylulose 5-phosphate: step 2/6.</text>
</comment>
<comment type="pathway">
    <text evidence="1">Isoprenoid biosynthesis; isopentenyl diphosphate biosynthesis via DXP pathway; isopentenyl diphosphate from 1-deoxy-D-xylulose 5-phosphate: step 4/6.</text>
</comment>
<comment type="similarity">
    <text evidence="1">In the N-terminal section; belongs to the IspD/TarI cytidylyltransferase family. IspD subfamily.</text>
</comment>
<comment type="similarity">
    <text evidence="1">In the C-terminal section; belongs to the IspF family.</text>
</comment>
<protein>
    <recommendedName>
        <fullName evidence="1">Bifunctional enzyme IspD/IspF</fullName>
    </recommendedName>
    <domain>
        <recommendedName>
            <fullName evidence="1">2-C-methyl-D-erythritol 4-phosphate cytidylyltransferase</fullName>
            <ecNumber evidence="1">2.7.7.60</ecNumber>
        </recommendedName>
        <alternativeName>
            <fullName evidence="1">4-diphosphocytidyl-2C-methyl-D-erythritol synthase</fullName>
        </alternativeName>
        <alternativeName>
            <fullName evidence="1">MEP cytidylyltransferase</fullName>
            <shortName evidence="1">MCT</shortName>
        </alternativeName>
    </domain>
    <domain>
        <recommendedName>
            <fullName evidence="1">2-C-methyl-D-erythritol 2,4-cyclodiphosphate synthase</fullName>
            <shortName evidence="1">MECDP-synthase</shortName>
            <shortName evidence="1">MECPP-synthase</shortName>
            <shortName evidence="1">MECPS</shortName>
            <ecNumber evidence="1">4.6.1.12</ecNumber>
        </recommendedName>
    </domain>
</protein>
<dbReference type="EC" id="2.7.7.60" evidence="1"/>
<dbReference type="EC" id="4.6.1.12" evidence="1"/>
<dbReference type="EMBL" id="CP000283">
    <property type="protein sequence ID" value="ABE39816.1"/>
    <property type="molecule type" value="Genomic_DNA"/>
</dbReference>
<dbReference type="SMR" id="Q137C3"/>
<dbReference type="STRING" id="316057.RPD_2587"/>
<dbReference type="KEGG" id="rpd:RPD_2587"/>
<dbReference type="eggNOG" id="COG0245">
    <property type="taxonomic scope" value="Bacteria"/>
</dbReference>
<dbReference type="eggNOG" id="COG1211">
    <property type="taxonomic scope" value="Bacteria"/>
</dbReference>
<dbReference type="HOGENOM" id="CLU_042800_1_0_5"/>
<dbReference type="BioCyc" id="RPAL316057:RPD_RS13010-MONOMER"/>
<dbReference type="UniPathway" id="UPA00056">
    <property type="reaction ID" value="UER00093"/>
</dbReference>
<dbReference type="UniPathway" id="UPA00056">
    <property type="reaction ID" value="UER00095"/>
</dbReference>
<dbReference type="Proteomes" id="UP000001818">
    <property type="component" value="Chromosome"/>
</dbReference>
<dbReference type="GO" id="GO:0008685">
    <property type="term" value="F:2-C-methyl-D-erythritol 2,4-cyclodiphosphate synthase activity"/>
    <property type="evidence" value="ECO:0007669"/>
    <property type="project" value="UniProtKB-UniRule"/>
</dbReference>
<dbReference type="GO" id="GO:0050518">
    <property type="term" value="F:2-C-methyl-D-erythritol 4-phosphate cytidylyltransferase activity"/>
    <property type="evidence" value="ECO:0007669"/>
    <property type="project" value="UniProtKB-UniRule"/>
</dbReference>
<dbReference type="GO" id="GO:0046872">
    <property type="term" value="F:metal ion binding"/>
    <property type="evidence" value="ECO:0007669"/>
    <property type="project" value="UniProtKB-KW"/>
</dbReference>
<dbReference type="GO" id="GO:0019288">
    <property type="term" value="P:isopentenyl diphosphate biosynthetic process, methylerythritol 4-phosphate pathway"/>
    <property type="evidence" value="ECO:0007669"/>
    <property type="project" value="UniProtKB-UniRule"/>
</dbReference>
<dbReference type="GO" id="GO:0016114">
    <property type="term" value="P:terpenoid biosynthetic process"/>
    <property type="evidence" value="ECO:0007669"/>
    <property type="project" value="InterPro"/>
</dbReference>
<dbReference type="CDD" id="cd02516">
    <property type="entry name" value="CDP-ME_synthetase"/>
    <property type="match status" value="1"/>
</dbReference>
<dbReference type="CDD" id="cd00554">
    <property type="entry name" value="MECDP_synthase"/>
    <property type="match status" value="1"/>
</dbReference>
<dbReference type="FunFam" id="3.90.550.10:FF:000003">
    <property type="entry name" value="2-C-methyl-D-erythritol 4-phosphate cytidylyltransferase"/>
    <property type="match status" value="1"/>
</dbReference>
<dbReference type="Gene3D" id="3.30.1330.50">
    <property type="entry name" value="2-C-methyl-D-erythritol 2,4-cyclodiphosphate synthase"/>
    <property type="match status" value="1"/>
</dbReference>
<dbReference type="Gene3D" id="3.90.550.10">
    <property type="entry name" value="Spore Coat Polysaccharide Biosynthesis Protein SpsA, Chain A"/>
    <property type="match status" value="1"/>
</dbReference>
<dbReference type="HAMAP" id="MF_00108">
    <property type="entry name" value="IspD"/>
    <property type="match status" value="1"/>
</dbReference>
<dbReference type="HAMAP" id="MF_01520">
    <property type="entry name" value="IspDF"/>
    <property type="match status" value="1"/>
</dbReference>
<dbReference type="HAMAP" id="MF_00107">
    <property type="entry name" value="IspF"/>
    <property type="match status" value="1"/>
</dbReference>
<dbReference type="InterPro" id="IPR001228">
    <property type="entry name" value="IspD"/>
</dbReference>
<dbReference type="InterPro" id="IPR026596">
    <property type="entry name" value="IspD/F"/>
</dbReference>
<dbReference type="InterPro" id="IPR034683">
    <property type="entry name" value="IspD/TarI"/>
</dbReference>
<dbReference type="InterPro" id="IPR018294">
    <property type="entry name" value="ISPD_synthase_CS"/>
</dbReference>
<dbReference type="InterPro" id="IPR003526">
    <property type="entry name" value="MECDP_synthase"/>
</dbReference>
<dbReference type="InterPro" id="IPR020555">
    <property type="entry name" value="MECDP_synthase_CS"/>
</dbReference>
<dbReference type="InterPro" id="IPR036571">
    <property type="entry name" value="MECDP_synthase_sf"/>
</dbReference>
<dbReference type="InterPro" id="IPR029044">
    <property type="entry name" value="Nucleotide-diphossugar_trans"/>
</dbReference>
<dbReference type="NCBIfam" id="TIGR00453">
    <property type="entry name" value="ispD"/>
    <property type="match status" value="1"/>
</dbReference>
<dbReference type="NCBIfam" id="TIGR00151">
    <property type="entry name" value="ispF"/>
    <property type="match status" value="1"/>
</dbReference>
<dbReference type="NCBIfam" id="NF006899">
    <property type="entry name" value="PRK09382.1"/>
    <property type="match status" value="1"/>
</dbReference>
<dbReference type="PANTHER" id="PTHR43181">
    <property type="entry name" value="2-C-METHYL-D-ERYTHRITOL 2,4-CYCLODIPHOSPHATE SYNTHASE, CHLOROPLASTIC"/>
    <property type="match status" value="1"/>
</dbReference>
<dbReference type="PANTHER" id="PTHR43181:SF1">
    <property type="entry name" value="2-C-METHYL-D-ERYTHRITOL 2,4-CYCLODIPHOSPHATE SYNTHASE, CHLOROPLASTIC"/>
    <property type="match status" value="1"/>
</dbReference>
<dbReference type="Pfam" id="PF01128">
    <property type="entry name" value="IspD"/>
    <property type="match status" value="1"/>
</dbReference>
<dbReference type="Pfam" id="PF02542">
    <property type="entry name" value="YgbB"/>
    <property type="match status" value="1"/>
</dbReference>
<dbReference type="SUPFAM" id="SSF69765">
    <property type="entry name" value="IpsF-like"/>
    <property type="match status" value="1"/>
</dbReference>
<dbReference type="SUPFAM" id="SSF53448">
    <property type="entry name" value="Nucleotide-diphospho-sugar transferases"/>
    <property type="match status" value="1"/>
</dbReference>
<dbReference type="PROSITE" id="PS01295">
    <property type="entry name" value="ISPD"/>
    <property type="match status" value="1"/>
</dbReference>
<dbReference type="PROSITE" id="PS01350">
    <property type="entry name" value="ISPF"/>
    <property type="match status" value="1"/>
</dbReference>
<gene>
    <name evidence="1" type="primary">ispDF</name>
    <name type="ordered locus">RPD_2587</name>
</gene>
<proteinExistence type="inferred from homology"/>
<organism>
    <name type="scientific">Rhodopseudomonas palustris (strain BisB5)</name>
    <dbReference type="NCBI Taxonomy" id="316057"/>
    <lineage>
        <taxon>Bacteria</taxon>
        <taxon>Pseudomonadati</taxon>
        <taxon>Pseudomonadota</taxon>
        <taxon>Alphaproteobacteria</taxon>
        <taxon>Hyphomicrobiales</taxon>
        <taxon>Nitrobacteraceae</taxon>
        <taxon>Rhodopseudomonas</taxon>
    </lineage>
</organism>
<evidence type="ECO:0000255" key="1">
    <source>
        <dbReference type="HAMAP-Rule" id="MF_01520"/>
    </source>
</evidence>
<sequence length="398" mass="42012">MPNPPRTAAIIVAAGRGLRAGAGGPKQYRTLAGRPVIARALQPFCTHPEVFAVQPVTNPDDTAIFNDAVTGLNFRPAVGGGATRQGSVRAGLEALAELNPDIVLIHDAARPFVTPDLISRAIVAAGQTGAALPVVAINDTVKQINAEGCVEATPDRARLRIAQTPQAFRFDVILDAHRRAARDGRDDFTDDAAIAEWAGLTVSTFEGDAANMKLTTPDDFIREESRLTALLGDIRTGTGYDVHAFGDGDHVWLCGLKVPHNRGFLAHSDGDVGLHALVDAILGALADGDIGSHFPPTDPQWKGAASDKFLKYAVERVAARGGRIANLEVTMICERPKIGPLREAMRARIAEITGLPVSRIAVKATTSERLGFTGREEGIAATASATIRLPWGAEGLAG</sequence>
<reference key="1">
    <citation type="submission" date="2006-03" db="EMBL/GenBank/DDBJ databases">
        <title>Complete sequence of Rhodopseudomonas palustris BisB5.</title>
        <authorList>
            <consortium name="US DOE Joint Genome Institute"/>
            <person name="Copeland A."/>
            <person name="Lucas S."/>
            <person name="Lapidus A."/>
            <person name="Barry K."/>
            <person name="Detter J.C."/>
            <person name="Glavina del Rio T."/>
            <person name="Hammon N."/>
            <person name="Israni S."/>
            <person name="Dalin E."/>
            <person name="Tice H."/>
            <person name="Pitluck S."/>
            <person name="Chain P."/>
            <person name="Malfatti S."/>
            <person name="Shin M."/>
            <person name="Vergez L."/>
            <person name="Schmutz J."/>
            <person name="Larimer F."/>
            <person name="Land M."/>
            <person name="Hauser L."/>
            <person name="Pelletier D.A."/>
            <person name="Kyrpides N."/>
            <person name="Lykidis A."/>
            <person name="Oda Y."/>
            <person name="Harwood C.S."/>
            <person name="Richardson P."/>
        </authorList>
    </citation>
    <scope>NUCLEOTIDE SEQUENCE [LARGE SCALE GENOMIC DNA]</scope>
    <source>
        <strain>BisB5</strain>
    </source>
</reference>
<feature type="chain" id="PRO_0000296755" description="Bifunctional enzyme IspD/IspF">
    <location>
        <begin position="1"/>
        <end position="398"/>
    </location>
</feature>
<feature type="region of interest" description="2-C-methyl-D-erythritol 4-phosphate cytidylyltransferase" evidence="1">
    <location>
        <begin position="1"/>
        <end position="234"/>
    </location>
</feature>
<feature type="region of interest" description="2-C-methyl-D-erythritol 2,4-cyclodiphosphate synthase" evidence="1">
    <location>
        <begin position="235"/>
        <end position="398"/>
    </location>
</feature>
<feature type="binding site" evidence="1">
    <location>
        <begin position="241"/>
        <end position="243"/>
    </location>
    <ligand>
        <name>4-CDP-2-C-methyl-D-erythritol 2-phosphate</name>
        <dbReference type="ChEBI" id="CHEBI:57919"/>
    </ligand>
</feature>
<feature type="binding site" evidence="1">
    <location>
        <position position="241"/>
    </location>
    <ligand>
        <name>a divalent metal cation</name>
        <dbReference type="ChEBI" id="CHEBI:60240"/>
    </ligand>
</feature>
<feature type="binding site" evidence="1">
    <location>
        <position position="243"/>
    </location>
    <ligand>
        <name>a divalent metal cation</name>
        <dbReference type="ChEBI" id="CHEBI:60240"/>
    </ligand>
</feature>
<feature type="binding site" evidence="1">
    <location>
        <begin position="267"/>
        <end position="268"/>
    </location>
    <ligand>
        <name>4-CDP-2-C-methyl-D-erythritol 2-phosphate</name>
        <dbReference type="ChEBI" id="CHEBI:57919"/>
    </ligand>
</feature>
<feature type="binding site" evidence="1">
    <location>
        <position position="275"/>
    </location>
    <ligand>
        <name>a divalent metal cation</name>
        <dbReference type="ChEBI" id="CHEBI:60240"/>
    </ligand>
</feature>
<feature type="binding site" evidence="1">
    <location>
        <begin position="289"/>
        <end position="291"/>
    </location>
    <ligand>
        <name>4-CDP-2-C-methyl-D-erythritol 2-phosphate</name>
        <dbReference type="ChEBI" id="CHEBI:57919"/>
    </ligand>
</feature>
<feature type="binding site" evidence="1">
    <location>
        <begin position="365"/>
        <end position="368"/>
    </location>
    <ligand>
        <name>4-CDP-2-C-methyl-D-erythritol 2-phosphate</name>
        <dbReference type="ChEBI" id="CHEBI:57919"/>
    </ligand>
</feature>
<feature type="binding site" evidence="1">
    <location>
        <position position="372"/>
    </location>
    <ligand>
        <name>4-CDP-2-C-methyl-D-erythritol 2-phosphate</name>
        <dbReference type="ChEBI" id="CHEBI:57919"/>
    </ligand>
</feature>
<feature type="binding site" evidence="1">
    <location>
        <position position="375"/>
    </location>
    <ligand>
        <name>4-CDP-2-C-methyl-D-erythritol 2-phosphate</name>
        <dbReference type="ChEBI" id="CHEBI:57919"/>
    </ligand>
</feature>
<feature type="site" description="Transition state stabilizer" evidence="1">
    <location>
        <position position="19"/>
    </location>
</feature>
<feature type="site" description="Transition state stabilizer" evidence="1">
    <location>
        <position position="26"/>
    </location>
</feature>
<feature type="site" description="Positions MEP for the nucleophilic attack" evidence="1">
    <location>
        <position position="156"/>
    </location>
</feature>
<feature type="site" description="Positions MEP for the nucleophilic attack" evidence="1">
    <location>
        <position position="213"/>
    </location>
</feature>
<feature type="site" description="Transition state stabilizer" evidence="1">
    <location>
        <position position="267"/>
    </location>
</feature>
<feature type="site" description="Transition state stabilizer" evidence="1">
    <location>
        <position position="366"/>
    </location>
</feature>
<keyword id="KW-0414">Isoprene biosynthesis</keyword>
<keyword id="KW-0456">Lyase</keyword>
<keyword id="KW-0479">Metal-binding</keyword>
<keyword id="KW-0511">Multifunctional enzyme</keyword>
<keyword id="KW-0548">Nucleotidyltransferase</keyword>
<keyword id="KW-0808">Transferase</keyword>
<accession>Q137C3</accession>
<name>ISPDF_RHOPS</name>